<reference key="1">
    <citation type="journal article" date="2010" name="J. Bacteriol.">
        <title>Whole genome sequences of two Xylella fastidiosa strains (M12 and M23) causing almond leaf scorch disease in California.</title>
        <authorList>
            <person name="Chen J."/>
            <person name="Xie G."/>
            <person name="Han S."/>
            <person name="Chertkov O."/>
            <person name="Sims D."/>
            <person name="Civerolo E.L."/>
        </authorList>
    </citation>
    <scope>NUCLEOTIDE SEQUENCE [LARGE SCALE GENOMIC DNA]</scope>
    <source>
        <strain>M12</strain>
    </source>
</reference>
<name>EFPL_XYLFM</name>
<proteinExistence type="inferred from homology"/>
<organism>
    <name type="scientific">Xylella fastidiosa (strain M12)</name>
    <dbReference type="NCBI Taxonomy" id="405440"/>
    <lineage>
        <taxon>Bacteria</taxon>
        <taxon>Pseudomonadati</taxon>
        <taxon>Pseudomonadota</taxon>
        <taxon>Gammaproteobacteria</taxon>
        <taxon>Lysobacterales</taxon>
        <taxon>Lysobacteraceae</taxon>
        <taxon>Xylella</taxon>
    </lineage>
</organism>
<dbReference type="EMBL" id="CP000941">
    <property type="protein sequence ID" value="ACA12328.1"/>
    <property type="molecule type" value="Genomic_DNA"/>
</dbReference>
<dbReference type="SMR" id="B0U399"/>
<dbReference type="KEGG" id="xfm:Xfasm12_1404"/>
<dbReference type="HOGENOM" id="CLU_074944_2_0_6"/>
<dbReference type="GO" id="GO:0005737">
    <property type="term" value="C:cytoplasm"/>
    <property type="evidence" value="ECO:0007669"/>
    <property type="project" value="InterPro"/>
</dbReference>
<dbReference type="GO" id="GO:0003746">
    <property type="term" value="F:translation elongation factor activity"/>
    <property type="evidence" value="ECO:0007669"/>
    <property type="project" value="UniProtKB-UniRule"/>
</dbReference>
<dbReference type="GO" id="GO:0043043">
    <property type="term" value="P:peptide biosynthetic process"/>
    <property type="evidence" value="ECO:0007669"/>
    <property type="project" value="InterPro"/>
</dbReference>
<dbReference type="CDD" id="cd05794">
    <property type="entry name" value="S1_EF-P_repeat_2"/>
    <property type="match status" value="1"/>
</dbReference>
<dbReference type="FunFam" id="2.40.50.140:FF:000004">
    <property type="entry name" value="Elongation factor P"/>
    <property type="match status" value="1"/>
</dbReference>
<dbReference type="Gene3D" id="2.30.30.30">
    <property type="match status" value="1"/>
</dbReference>
<dbReference type="Gene3D" id="2.40.50.140">
    <property type="entry name" value="Nucleic acid-binding proteins"/>
    <property type="match status" value="2"/>
</dbReference>
<dbReference type="HAMAP" id="MF_00646">
    <property type="entry name" value="EFP"/>
    <property type="match status" value="1"/>
</dbReference>
<dbReference type="InterPro" id="IPR015365">
    <property type="entry name" value="Elong-fact-P_C"/>
</dbReference>
<dbReference type="InterPro" id="IPR012340">
    <property type="entry name" value="NA-bd_OB-fold"/>
</dbReference>
<dbReference type="InterPro" id="IPR014722">
    <property type="entry name" value="Rib_uL2_dom2"/>
</dbReference>
<dbReference type="InterPro" id="IPR020599">
    <property type="entry name" value="Transl_elong_fac_P/YeiP"/>
</dbReference>
<dbReference type="InterPro" id="IPR013185">
    <property type="entry name" value="Transl_elong_KOW-like"/>
</dbReference>
<dbReference type="InterPro" id="IPR011897">
    <property type="entry name" value="Transl_elong_p-like_YeiP"/>
</dbReference>
<dbReference type="InterPro" id="IPR001059">
    <property type="entry name" value="Transl_elong_P/YeiP_cen"/>
</dbReference>
<dbReference type="InterPro" id="IPR013852">
    <property type="entry name" value="Transl_elong_P/YeiP_CS"/>
</dbReference>
<dbReference type="InterPro" id="IPR008991">
    <property type="entry name" value="Translation_prot_SH3-like_sf"/>
</dbReference>
<dbReference type="NCBIfam" id="NF003392">
    <property type="entry name" value="PRK04542.1"/>
    <property type="match status" value="1"/>
</dbReference>
<dbReference type="NCBIfam" id="TIGR02178">
    <property type="entry name" value="yeiP"/>
    <property type="match status" value="1"/>
</dbReference>
<dbReference type="PANTHER" id="PTHR30053">
    <property type="entry name" value="ELONGATION FACTOR P"/>
    <property type="match status" value="1"/>
</dbReference>
<dbReference type="PANTHER" id="PTHR30053:SF14">
    <property type="entry name" value="TRANSLATION ELONGATION FACTOR KOW-LIKE DOMAIN-CONTAINING PROTEIN"/>
    <property type="match status" value="1"/>
</dbReference>
<dbReference type="Pfam" id="PF01132">
    <property type="entry name" value="EFP"/>
    <property type="match status" value="1"/>
</dbReference>
<dbReference type="Pfam" id="PF08207">
    <property type="entry name" value="EFP_N"/>
    <property type="match status" value="1"/>
</dbReference>
<dbReference type="Pfam" id="PF09285">
    <property type="entry name" value="Elong-fact-P_C"/>
    <property type="match status" value="1"/>
</dbReference>
<dbReference type="PIRSF" id="PIRSF005901">
    <property type="entry name" value="EF-P"/>
    <property type="match status" value="1"/>
</dbReference>
<dbReference type="SMART" id="SM01185">
    <property type="entry name" value="EFP"/>
    <property type="match status" value="1"/>
</dbReference>
<dbReference type="SMART" id="SM00841">
    <property type="entry name" value="Elong-fact-P_C"/>
    <property type="match status" value="1"/>
</dbReference>
<dbReference type="SUPFAM" id="SSF50249">
    <property type="entry name" value="Nucleic acid-binding proteins"/>
    <property type="match status" value="2"/>
</dbReference>
<dbReference type="SUPFAM" id="SSF50104">
    <property type="entry name" value="Translation proteins SH3-like domain"/>
    <property type="match status" value="1"/>
</dbReference>
<dbReference type="PROSITE" id="PS01275">
    <property type="entry name" value="EFP"/>
    <property type="match status" value="1"/>
</dbReference>
<protein>
    <recommendedName>
        <fullName evidence="1">Elongation factor P-like protein</fullName>
    </recommendedName>
</protein>
<comment type="similarity">
    <text evidence="1">Belongs to the elongation factor P family.</text>
</comment>
<gene>
    <name type="ordered locus">Xfasm12_1404</name>
</gene>
<evidence type="ECO:0000255" key="1">
    <source>
        <dbReference type="HAMAP-Rule" id="MF_00646"/>
    </source>
</evidence>
<sequence length="188" mass="20470">MKASEMKKGSIVEYNNGTYQIRDIQRSSPQGRGGNVRFRFVMYSVPGGSKLEASFDADEMLTAVELLRREASFSYKDGEAFVFLDEENYTLYTLDAEAIGDNAGYISEGLSGCYVQLIDASPVALQLPQHVVLEVVDTPPELKGGTATKRPKPAKLITGIEVMVPEYITTGERILVNTTTGAFGGRAS</sequence>
<feature type="chain" id="PRO_1000130932" description="Elongation factor P-like protein">
    <location>
        <begin position="1"/>
        <end position="188"/>
    </location>
</feature>
<accession>B0U399</accession>